<organism evidence="3">
    <name type="scientific">Arabidopsis thaliana</name>
    <name type="common">Mouse-ear cress</name>
    <dbReference type="NCBI Taxonomy" id="3702"/>
    <lineage>
        <taxon>Eukaryota</taxon>
        <taxon>Viridiplantae</taxon>
        <taxon>Streptophyta</taxon>
        <taxon>Embryophyta</taxon>
        <taxon>Tracheophyta</taxon>
        <taxon>Spermatophyta</taxon>
        <taxon>Magnoliopsida</taxon>
        <taxon>eudicotyledons</taxon>
        <taxon>Gunneridae</taxon>
        <taxon>Pentapetalae</taxon>
        <taxon>rosids</taxon>
        <taxon>malvids</taxon>
        <taxon>Brassicales</taxon>
        <taxon>Brassicaceae</taxon>
        <taxon>Camelineae</taxon>
        <taxon>Arabidopsis</taxon>
    </lineage>
</organism>
<name>DF226_ARATH</name>
<gene>
    <name type="primary">SCRL2</name>
    <name type="ordered locus">At1g65113</name>
    <name type="ORF">T23K8</name>
</gene>
<comment type="subcellular location">
    <subcellularLocation>
        <location evidence="1">Secreted</location>
    </subcellularLocation>
</comment>
<comment type="similarity">
    <text evidence="3">Belongs to the DEFL family.</text>
</comment>
<evidence type="ECO:0000250" key="1"/>
<evidence type="ECO:0000255" key="2"/>
<evidence type="ECO:0000305" key="3"/>
<sequence length="92" mass="10469">MKCGVLFMISCLLITFLVLSHVREVESKTKWGCDMNRPFPGKCGTNGKDTCISDIKKMPGAPKDLVVRCECSQRFVWKGYPPERLCKCQYDC</sequence>
<proteinExistence type="inferred from homology"/>
<keyword id="KW-0929">Antimicrobial</keyword>
<keyword id="KW-1015">Disulfide bond</keyword>
<keyword id="KW-0295">Fungicide</keyword>
<keyword id="KW-0611">Plant defense</keyword>
<keyword id="KW-1185">Reference proteome</keyword>
<keyword id="KW-0964">Secreted</keyword>
<keyword id="KW-0732">Signal</keyword>
<feature type="signal peptide" evidence="2">
    <location>
        <begin position="1"/>
        <end position="27"/>
    </location>
</feature>
<feature type="chain" id="PRO_0000031928" description="Defensin-like protein 226">
    <location>
        <begin position="28"/>
        <end position="92"/>
    </location>
</feature>
<feature type="disulfide bond" evidence="1">
    <location>
        <begin position="33"/>
        <end position="92"/>
    </location>
</feature>
<feature type="disulfide bond" evidence="1">
    <location>
        <begin position="43"/>
        <end position="71"/>
    </location>
</feature>
<feature type="disulfide bond" evidence="1">
    <location>
        <begin position="51"/>
        <end position="86"/>
    </location>
</feature>
<feature type="disulfide bond" evidence="1">
    <location>
        <begin position="69"/>
        <end position="88"/>
    </location>
</feature>
<protein>
    <recommendedName>
        <fullName>Defensin-like protein 226</fullName>
    </recommendedName>
    <alternativeName>
        <fullName>S locus cysteine-rich-like protein 2</fullName>
        <shortName>Protein SCRL2</shortName>
        <shortName>SCR-like protein 2</shortName>
    </alternativeName>
</protein>
<accession>P82621</accession>
<dbReference type="EMBL" id="AC007230">
    <property type="status" value="NOT_ANNOTATED_CDS"/>
    <property type="molecule type" value="Genomic_DNA"/>
</dbReference>
<dbReference type="EMBL" id="CP002684">
    <property type="protein sequence ID" value="AEE34332.1"/>
    <property type="molecule type" value="Genomic_DNA"/>
</dbReference>
<dbReference type="EMBL" id="EF182847">
    <property type="status" value="NOT_ANNOTATED_CDS"/>
    <property type="molecule type" value="mRNA"/>
</dbReference>
<dbReference type="RefSeq" id="NP_001031236.1">
    <property type="nucleotide sequence ID" value="NM_001036159.3"/>
</dbReference>
<dbReference type="SMR" id="P82621"/>
<dbReference type="STRING" id="3702.P82621"/>
<dbReference type="PaxDb" id="3702-AT1G65113.1"/>
<dbReference type="ProteomicsDB" id="224147"/>
<dbReference type="EnsemblPlants" id="AT1G65113.1">
    <property type="protein sequence ID" value="AT1G65113.1"/>
    <property type="gene ID" value="AT1G65113"/>
</dbReference>
<dbReference type="GeneID" id="3767635"/>
<dbReference type="Gramene" id="AT1G65113.1">
    <property type="protein sequence ID" value="AT1G65113.1"/>
    <property type="gene ID" value="AT1G65113"/>
</dbReference>
<dbReference type="KEGG" id="ath:AT1G65113"/>
<dbReference type="Araport" id="AT1G65113"/>
<dbReference type="TAIR" id="AT1G65113">
    <property type="gene designation" value="SCRL2"/>
</dbReference>
<dbReference type="HOGENOM" id="CLU_174283_0_0_1"/>
<dbReference type="InParanoid" id="P82621"/>
<dbReference type="OMA" id="CSQRFVW"/>
<dbReference type="PhylomeDB" id="P82621"/>
<dbReference type="PRO" id="PR:P82621"/>
<dbReference type="Proteomes" id="UP000006548">
    <property type="component" value="Chromosome 1"/>
</dbReference>
<dbReference type="ExpressionAtlas" id="P82621">
    <property type="expression patterns" value="baseline"/>
</dbReference>
<dbReference type="GO" id="GO:0005576">
    <property type="term" value="C:extracellular region"/>
    <property type="evidence" value="ECO:0007669"/>
    <property type="project" value="UniProtKB-SubCell"/>
</dbReference>
<dbReference type="GO" id="GO:0050832">
    <property type="term" value="P:defense response to fungus"/>
    <property type="evidence" value="ECO:0007669"/>
    <property type="project" value="UniProtKB-KW"/>
</dbReference>
<dbReference type="GO" id="GO:0031640">
    <property type="term" value="P:killing of cells of another organism"/>
    <property type="evidence" value="ECO:0007669"/>
    <property type="project" value="UniProtKB-KW"/>
</dbReference>
<dbReference type="GO" id="GO:0007165">
    <property type="term" value="P:signal transduction"/>
    <property type="evidence" value="ECO:0007669"/>
    <property type="project" value="InterPro"/>
</dbReference>
<dbReference type="InterPro" id="IPR010682">
    <property type="entry name" value="SCRL"/>
</dbReference>
<dbReference type="PANTHER" id="PTHR34450:SF4">
    <property type="entry name" value="DEFENSIN-LIKE PROTEIN 226-RELATED"/>
    <property type="match status" value="1"/>
</dbReference>
<dbReference type="PANTHER" id="PTHR34450">
    <property type="entry name" value="DEFENSIN-LIKE PROTEIN 245-RELATED"/>
    <property type="match status" value="1"/>
</dbReference>
<dbReference type="Pfam" id="PF06876">
    <property type="entry name" value="SCRL"/>
    <property type="match status" value="1"/>
</dbReference>
<reference evidence="3" key="1">
    <citation type="journal article" date="2000" name="Nature">
        <title>Sequence and analysis of chromosome 1 of the plant Arabidopsis thaliana.</title>
        <authorList>
            <person name="Theologis A."/>
            <person name="Ecker J.R."/>
            <person name="Palm C.J."/>
            <person name="Federspiel N.A."/>
            <person name="Kaul S."/>
            <person name="White O."/>
            <person name="Alonso J."/>
            <person name="Altafi H."/>
            <person name="Araujo R."/>
            <person name="Bowman C.L."/>
            <person name="Brooks S.Y."/>
            <person name="Buehler E."/>
            <person name="Chan A."/>
            <person name="Chao Q."/>
            <person name="Chen H."/>
            <person name="Cheuk R.F."/>
            <person name="Chin C.W."/>
            <person name="Chung M.K."/>
            <person name="Conn L."/>
            <person name="Conway A.B."/>
            <person name="Conway A.R."/>
            <person name="Creasy T.H."/>
            <person name="Dewar K."/>
            <person name="Dunn P."/>
            <person name="Etgu P."/>
            <person name="Feldblyum T.V."/>
            <person name="Feng J.-D."/>
            <person name="Fong B."/>
            <person name="Fujii C.Y."/>
            <person name="Gill J.E."/>
            <person name="Goldsmith A.D."/>
            <person name="Haas B."/>
            <person name="Hansen N.F."/>
            <person name="Hughes B."/>
            <person name="Huizar L."/>
            <person name="Hunter J.L."/>
            <person name="Jenkins J."/>
            <person name="Johnson-Hopson C."/>
            <person name="Khan S."/>
            <person name="Khaykin E."/>
            <person name="Kim C.J."/>
            <person name="Koo H.L."/>
            <person name="Kremenetskaia I."/>
            <person name="Kurtz D.B."/>
            <person name="Kwan A."/>
            <person name="Lam B."/>
            <person name="Langin-Hooper S."/>
            <person name="Lee A."/>
            <person name="Lee J.M."/>
            <person name="Lenz C.A."/>
            <person name="Li J.H."/>
            <person name="Li Y.-P."/>
            <person name="Lin X."/>
            <person name="Liu S.X."/>
            <person name="Liu Z.A."/>
            <person name="Luros J.S."/>
            <person name="Maiti R."/>
            <person name="Marziali A."/>
            <person name="Militscher J."/>
            <person name="Miranda M."/>
            <person name="Nguyen M."/>
            <person name="Nierman W.C."/>
            <person name="Osborne B.I."/>
            <person name="Pai G."/>
            <person name="Peterson J."/>
            <person name="Pham P.K."/>
            <person name="Rizzo M."/>
            <person name="Rooney T."/>
            <person name="Rowley D."/>
            <person name="Sakano H."/>
            <person name="Salzberg S.L."/>
            <person name="Schwartz J.R."/>
            <person name="Shinn P."/>
            <person name="Southwick A.M."/>
            <person name="Sun H."/>
            <person name="Tallon L.J."/>
            <person name="Tambunga G."/>
            <person name="Toriumi M.J."/>
            <person name="Town C.D."/>
            <person name="Utterback T."/>
            <person name="Van Aken S."/>
            <person name="Vaysberg M."/>
            <person name="Vysotskaia V.S."/>
            <person name="Walker M."/>
            <person name="Wu D."/>
            <person name="Yu G."/>
            <person name="Fraser C.M."/>
            <person name="Venter J.C."/>
            <person name="Davis R.W."/>
        </authorList>
    </citation>
    <scope>NUCLEOTIDE SEQUENCE [LARGE SCALE GENOMIC DNA]</scope>
    <source>
        <strain>cv. Columbia</strain>
    </source>
</reference>
<reference key="2">
    <citation type="journal article" date="2017" name="Plant J.">
        <title>Araport11: a complete reannotation of the Arabidopsis thaliana reference genome.</title>
        <authorList>
            <person name="Cheng C.Y."/>
            <person name="Krishnakumar V."/>
            <person name="Chan A.P."/>
            <person name="Thibaud-Nissen F."/>
            <person name="Schobel S."/>
            <person name="Town C.D."/>
        </authorList>
    </citation>
    <scope>GENOME REANNOTATION</scope>
    <source>
        <strain>cv. Columbia</strain>
    </source>
</reference>
<reference key="3">
    <citation type="journal article" date="2007" name="Plant J.">
        <title>Small cysteine-rich peptides resembling antimicrobial peptides have been under-predicted in plants.</title>
        <authorList>
            <person name="Silverstein K.A.T."/>
            <person name="Moskal W.A. Jr."/>
            <person name="Wu H.C."/>
            <person name="Underwood B.A."/>
            <person name="Graham M.A."/>
            <person name="Town C.D."/>
            <person name="VandenBosch K.A."/>
        </authorList>
    </citation>
    <scope>NUCLEOTIDE SEQUENCE [LARGE SCALE MRNA] OF 31-92</scope>
    <source>
        <strain>cv. Columbia</strain>
    </source>
</reference>
<reference evidence="3" key="4">
    <citation type="journal article" date="2001" name="Plant Mol. Biol.">
        <title>Two large Arabidopsis thaliana gene families are homologous to the Brassica gene superfamily that encodes pollen coat proteins and the male component of the self-incompatibility response.</title>
        <authorList>
            <person name="Vanoosthuyse V."/>
            <person name="Miege C."/>
            <person name="Dumas C."/>
            <person name="Cock J.M."/>
        </authorList>
    </citation>
    <scope>IDENTIFICATION</scope>
</reference>
<reference key="5">
    <citation type="journal article" date="2005" name="Plant Physiol.">
        <title>Genome organization of more than 300 defensin-like genes in Arabidopsis.</title>
        <authorList>
            <person name="Silverstein K.A.T."/>
            <person name="Graham M.A."/>
            <person name="Paape T.D."/>
            <person name="VandenBosch K.A."/>
        </authorList>
    </citation>
    <scope>GENE FAMILY</scope>
</reference>